<name>IF4F1_YEAST</name>
<feature type="chain" id="PRO_0000213331" description="Eukaryotic initiation factor 4F subunit p150">
    <location>
        <begin position="1"/>
        <end position="952"/>
    </location>
</feature>
<feature type="domain" description="MIF4G">
    <location>
        <begin position="607"/>
        <end position="850"/>
    </location>
</feature>
<feature type="region of interest" description="Disordered" evidence="2">
    <location>
        <begin position="1"/>
        <end position="77"/>
    </location>
</feature>
<feature type="region of interest" description="Disordered" evidence="2">
    <location>
        <begin position="115"/>
        <end position="389"/>
    </location>
</feature>
<feature type="region of interest" description="Interaction with PAB1">
    <location>
        <begin position="188"/>
        <end position="299"/>
    </location>
</feature>
<feature type="region of interest" description="Disordered" evidence="2">
    <location>
        <begin position="481"/>
        <end position="575"/>
    </location>
</feature>
<feature type="region of interest" description="Disordered" evidence="2">
    <location>
        <begin position="870"/>
        <end position="952"/>
    </location>
</feature>
<feature type="compositionally biased region" description="Polar residues" evidence="2">
    <location>
        <begin position="7"/>
        <end position="16"/>
    </location>
</feature>
<feature type="compositionally biased region" description="Low complexity" evidence="2">
    <location>
        <begin position="29"/>
        <end position="46"/>
    </location>
</feature>
<feature type="compositionally biased region" description="Polar residues" evidence="2">
    <location>
        <begin position="47"/>
        <end position="56"/>
    </location>
</feature>
<feature type="compositionally biased region" description="Low complexity" evidence="2">
    <location>
        <begin position="65"/>
        <end position="74"/>
    </location>
</feature>
<feature type="compositionally biased region" description="Basic and acidic residues" evidence="2">
    <location>
        <begin position="140"/>
        <end position="151"/>
    </location>
</feature>
<feature type="compositionally biased region" description="Polar residues" evidence="2">
    <location>
        <begin position="154"/>
        <end position="166"/>
    </location>
</feature>
<feature type="compositionally biased region" description="Low complexity" evidence="2">
    <location>
        <begin position="175"/>
        <end position="191"/>
    </location>
</feature>
<feature type="compositionally biased region" description="Basic and acidic residues" evidence="2">
    <location>
        <begin position="218"/>
        <end position="228"/>
    </location>
</feature>
<feature type="compositionally biased region" description="Polar residues" evidence="2">
    <location>
        <begin position="229"/>
        <end position="244"/>
    </location>
</feature>
<feature type="compositionally biased region" description="Basic and acidic residues" evidence="2">
    <location>
        <begin position="246"/>
        <end position="276"/>
    </location>
</feature>
<feature type="compositionally biased region" description="Basic and acidic residues" evidence="2">
    <location>
        <begin position="283"/>
        <end position="294"/>
    </location>
</feature>
<feature type="compositionally biased region" description="Basic and acidic residues" evidence="2">
    <location>
        <begin position="309"/>
        <end position="333"/>
    </location>
</feature>
<feature type="compositionally biased region" description="Polar residues" evidence="2">
    <location>
        <begin position="355"/>
        <end position="368"/>
    </location>
</feature>
<feature type="compositionally biased region" description="Basic and acidic residues" evidence="2">
    <location>
        <begin position="504"/>
        <end position="521"/>
    </location>
</feature>
<feature type="compositionally biased region" description="Basic and acidic residues" evidence="2">
    <location>
        <begin position="532"/>
        <end position="569"/>
    </location>
</feature>
<feature type="compositionally biased region" description="Low complexity" evidence="2">
    <location>
        <begin position="879"/>
        <end position="894"/>
    </location>
</feature>
<feature type="compositionally biased region" description="Polar residues" evidence="2">
    <location>
        <begin position="908"/>
        <end position="922"/>
    </location>
</feature>
<feature type="modified residue" description="Phosphoserine" evidence="9">
    <location>
        <position position="163"/>
    </location>
</feature>
<feature type="modified residue" description="Phosphothreonine" evidence="18">
    <location>
        <position position="181"/>
    </location>
</feature>
<feature type="modified residue" description="Phosphoserine" evidence="9">
    <location>
        <position position="195"/>
    </location>
</feature>
<feature type="modified residue" description="Phosphoserine" evidence="9">
    <location>
        <position position="503"/>
    </location>
</feature>
<feature type="modified residue" description="Phosphoserine" evidence="17">
    <location>
        <position position="883"/>
    </location>
</feature>
<feature type="modified residue" description="Phosphothreonine" evidence="17">
    <location>
        <position position="888"/>
    </location>
</feature>
<feature type="modified residue" description="Phosphoserine" evidence="9">
    <location>
        <position position="892"/>
    </location>
</feature>
<feature type="modified residue" description="Phosphoserine" evidence="9">
    <location>
        <position position="896"/>
    </location>
</feature>
<feature type="modified residue" description="Phosphoserine" evidence="9 19">
    <location>
        <position position="908"/>
    </location>
</feature>
<feature type="modified residue" description="Phosphoserine" evidence="9 18 19 20">
    <location>
        <position position="948"/>
    </location>
</feature>
<feature type="mutagenesis site" description="In TIF4631-213; abolishes interaction with PAB1 and inhibits poly(A)-dependent translation." evidence="10">
    <original>KLRK</original>
    <variation>AAAA</variation>
    <location>
        <begin position="214"/>
        <end position="217"/>
    </location>
</feature>
<feature type="sequence conflict" description="In Ref. 1; AAA02757." evidence="13" ref="1">
    <original>H</original>
    <variation>Q</variation>
    <location>
        <position position="7"/>
    </location>
</feature>
<feature type="sequence conflict" description="In Ref. 1; AAA02757." evidence="13" ref="1">
    <original>T</original>
    <variation>N</variation>
    <location>
        <position position="37"/>
    </location>
</feature>
<feature type="sequence conflict" description="In Ref. 1; AAA02757." evidence="13" ref="1">
    <original>Q</original>
    <variation>K</variation>
    <location>
        <position position="110"/>
    </location>
</feature>
<feature type="sequence conflict" description="In Ref. 1; AAA02757." evidence="13" ref="1">
    <original>R</original>
    <variation>K</variation>
    <location>
        <position position="207"/>
    </location>
</feature>
<feature type="sequence conflict" description="In Ref. 1; AAA02757." evidence="13" ref="1">
    <original>D</original>
    <variation>E</variation>
    <location>
        <position position="361"/>
    </location>
</feature>
<feature type="strand" evidence="24">
    <location>
        <begin position="43"/>
        <end position="45"/>
    </location>
</feature>
<feature type="helix" evidence="21">
    <location>
        <begin position="411"/>
        <end position="419"/>
    </location>
</feature>
<feature type="helix" evidence="21">
    <location>
        <begin position="427"/>
        <end position="429"/>
    </location>
</feature>
<feature type="helix" evidence="21">
    <location>
        <begin position="443"/>
        <end position="445"/>
    </location>
</feature>
<feature type="helix" evidence="21">
    <location>
        <begin position="454"/>
        <end position="464"/>
    </location>
</feature>
<feature type="helix" evidence="21">
    <location>
        <begin position="471"/>
        <end position="476"/>
    </location>
</feature>
<feature type="helix" evidence="22">
    <location>
        <begin position="603"/>
        <end position="615"/>
    </location>
</feature>
<feature type="strand" evidence="23">
    <location>
        <begin position="619"/>
        <end position="621"/>
    </location>
</feature>
<feature type="helix" evidence="22">
    <location>
        <begin position="622"/>
        <end position="634"/>
    </location>
</feature>
<feature type="helix" evidence="22">
    <location>
        <begin position="635"/>
        <end position="638"/>
    </location>
</feature>
<feature type="helix" evidence="22">
    <location>
        <begin position="643"/>
        <end position="658"/>
    </location>
</feature>
<feature type="helix" evidence="22">
    <location>
        <begin position="660"/>
        <end position="662"/>
    </location>
</feature>
<feature type="helix" evidence="22">
    <location>
        <begin position="663"/>
        <end position="676"/>
    </location>
</feature>
<feature type="helix" evidence="22">
    <location>
        <begin position="692"/>
        <end position="709"/>
    </location>
</feature>
<feature type="helix" evidence="22">
    <location>
        <begin position="733"/>
        <end position="755"/>
    </location>
</feature>
<feature type="helix" evidence="22">
    <location>
        <begin position="761"/>
        <end position="776"/>
    </location>
</feature>
<feature type="helix" evidence="22">
    <location>
        <begin position="781"/>
        <end position="798"/>
    </location>
</feature>
<feature type="helix" evidence="22">
    <location>
        <begin position="812"/>
        <end position="827"/>
    </location>
</feature>
<feature type="helix" evidence="22">
    <location>
        <begin position="834"/>
        <end position="848"/>
    </location>
</feature>
<organism>
    <name type="scientific">Saccharomyces cerevisiae (strain ATCC 204508 / S288c)</name>
    <name type="common">Baker's yeast</name>
    <dbReference type="NCBI Taxonomy" id="559292"/>
    <lineage>
        <taxon>Eukaryota</taxon>
        <taxon>Fungi</taxon>
        <taxon>Dikarya</taxon>
        <taxon>Ascomycota</taxon>
        <taxon>Saccharomycotina</taxon>
        <taxon>Saccharomycetes</taxon>
        <taxon>Saccharomycetales</taxon>
        <taxon>Saccharomycetaceae</taxon>
        <taxon>Saccharomyces</taxon>
    </lineage>
</organism>
<gene>
    <name evidence="12" type="primary">TIF4631</name>
    <name type="ordered locus">YGR162W</name>
</gene>
<sequence>MTDETAHPTQSASKQESAALKQTGDDQQESQQQRGYTNYNNGSNYTQKKPYNSNRPHQQRGGKFGPNRYNNRGNYNGGGSFRGGHMGANSSNVPWTGYYNNYPVYYQPQQMAAAGSAPANPIPVEEKSPVPTKIEITTKSGEHLDLKEQHKAKLQSQERSTVSPQPESKLKETSDSTSTSTPTPTPSTNDSKASSEENISEAEKTRRNFIEQVKLRKAALEKKRKEQLEGSSGNNNIPMKTTPENVEEKGSDKPEVTEKTKPAEEKSAEPEVKQETPAEEGEQGEKGQIKEESTPKVLTFAERLKLKKQQKEREEKTEGKENKEVPVQEETKSAIESAPVPPSEQVKEETEVAETEQSNIDESATTPAIPTKSDEAEAEVEAEAGDAGTKIGLEAEIETTTDETDDGTNTVSHILNVLKDATPIEDVFSFNYPEGIEGPDIKYKKEHVKYTYGPTFLLQFKDKLNVKADAEWVQSTASKIVIPPGMGRGNRSRDSGRFGNNSSRGHDFRNTSVRNMDDRANSRTSSKRRSKRMNDDRRSNRSYTSRRDRERGSYRNEEKREDDKPKEEVAPLVPSANRWVPKFKSKKTEKKLAPDGKTELLDKDEVERKMKSLLNKLTLEMFDAISSEILAIANISVWETNGETLKAVIEQIFLKACDEPHWSSMYAQLCGKVVKELNPDITDETNEGKTGPKLVLHYLVARCHAEFDKGWTDKLPTNEDGTPLEPEMMSEEYYAAASAKRRGLGLVRFIGFLYRLNLLTGKMMFECFRRLMKDLTDSPSEETLESVVELLNTVGEQFETDSFRTGQATLEGSQLLDSLFGILDNIIQTAKISSRIKFKLIDIKELRHDKNWNSDKKDNGPKTIQQIHEEEERQRQLKNNSRSNSRRTNNSSNRHSFRRDAPPASKDSFITTRTYSQRNSQRAPPPKEEPAAPTSTATNMFSALMGESDDEE</sequence>
<dbReference type="EMBL" id="L16923">
    <property type="protein sequence ID" value="AAA02757.1"/>
    <property type="molecule type" value="Genomic_DNA"/>
</dbReference>
<dbReference type="EMBL" id="Z72947">
    <property type="protein sequence ID" value="CAA97184.1"/>
    <property type="molecule type" value="Genomic_DNA"/>
</dbReference>
<dbReference type="EMBL" id="AY692973">
    <property type="protein sequence ID" value="AAT92992.1"/>
    <property type="molecule type" value="Genomic_DNA"/>
</dbReference>
<dbReference type="EMBL" id="BK006941">
    <property type="protein sequence ID" value="DAA08257.1"/>
    <property type="molecule type" value="Genomic_DNA"/>
</dbReference>
<dbReference type="PIR" id="S64473">
    <property type="entry name" value="S64473"/>
</dbReference>
<dbReference type="RefSeq" id="NP_011678.3">
    <property type="nucleotide sequence ID" value="NM_001181291.3"/>
</dbReference>
<dbReference type="PDB" id="1RF8">
    <property type="method" value="NMR"/>
    <property type="chains" value="B=391-488"/>
</dbReference>
<dbReference type="PDB" id="2VSO">
    <property type="method" value="X-ray"/>
    <property type="resolution" value="2.60 A"/>
    <property type="chains" value="E/F=572-854"/>
</dbReference>
<dbReference type="PDB" id="2VSX">
    <property type="method" value="X-ray"/>
    <property type="resolution" value="2.80 A"/>
    <property type="chains" value="E/F=572-854"/>
</dbReference>
<dbReference type="PDB" id="6Z29">
    <property type="method" value="NMR"/>
    <property type="chains" value="A=35-49"/>
</dbReference>
<dbReference type="PDBsum" id="1RF8"/>
<dbReference type="PDBsum" id="2VSO"/>
<dbReference type="PDBsum" id="2VSX"/>
<dbReference type="PDBsum" id="6Z29"/>
<dbReference type="SASBDB" id="P39935"/>
<dbReference type="SMR" id="P39935"/>
<dbReference type="BioGRID" id="33414">
    <property type="interactions" value="458"/>
</dbReference>
<dbReference type="ComplexPortal" id="CPX-430">
    <property type="entry name" value="Eukaryotic translation initiation factor 4F complex, variant TIF4631"/>
</dbReference>
<dbReference type="DIP" id="DIP-985N"/>
<dbReference type="ELM" id="P39935"/>
<dbReference type="FunCoup" id="P39935">
    <property type="interactions" value="743"/>
</dbReference>
<dbReference type="IntAct" id="P39935">
    <property type="interactions" value="87"/>
</dbReference>
<dbReference type="MINT" id="P39935"/>
<dbReference type="STRING" id="4932.YGR162W"/>
<dbReference type="GlyGen" id="P39935">
    <property type="glycosylation" value="2 sites, 1 O-linked glycan (1 site)"/>
</dbReference>
<dbReference type="iPTMnet" id="P39935"/>
<dbReference type="PaxDb" id="4932-YGR162W"/>
<dbReference type="PeptideAtlas" id="P39935"/>
<dbReference type="EnsemblFungi" id="YGR162W_mRNA">
    <property type="protein sequence ID" value="YGR162W"/>
    <property type="gene ID" value="YGR162W"/>
</dbReference>
<dbReference type="GeneID" id="853071"/>
<dbReference type="KEGG" id="sce:YGR162W"/>
<dbReference type="AGR" id="SGD:S000003394"/>
<dbReference type="SGD" id="S000003394">
    <property type="gene designation" value="TIF4631"/>
</dbReference>
<dbReference type="VEuPathDB" id="FungiDB:YGR162W"/>
<dbReference type="eggNOG" id="KOG0401">
    <property type="taxonomic scope" value="Eukaryota"/>
</dbReference>
<dbReference type="GeneTree" id="ENSGT00940000154675"/>
<dbReference type="HOGENOM" id="CLU_006715_1_0_1"/>
<dbReference type="InParanoid" id="P39935"/>
<dbReference type="OMA" id="QFYSVIT"/>
<dbReference type="OrthoDB" id="514777at2759"/>
<dbReference type="BioCyc" id="YEAST:G3O-30861-MONOMER"/>
<dbReference type="Reactome" id="R-SCE-156827">
    <property type="pathway name" value="L13a-mediated translational silencing of Ceruloplasmin expression"/>
</dbReference>
<dbReference type="Reactome" id="R-SCE-166208">
    <property type="pathway name" value="mTORC1-mediated signalling"/>
</dbReference>
<dbReference type="Reactome" id="R-SCE-429947">
    <property type="pathway name" value="Deadenylation of mRNA"/>
</dbReference>
<dbReference type="Reactome" id="R-SCE-72649">
    <property type="pathway name" value="Translation initiation complex formation"/>
</dbReference>
<dbReference type="Reactome" id="R-SCE-72662">
    <property type="pathway name" value="Activation of the mRNA upon binding of the cap-binding complex and eIFs, and subsequent binding to 43S"/>
</dbReference>
<dbReference type="Reactome" id="R-SCE-72702">
    <property type="pathway name" value="Ribosomal scanning and start codon recognition"/>
</dbReference>
<dbReference type="Reactome" id="R-SCE-975956">
    <property type="pathway name" value="Nonsense Mediated Decay (NMD) independent of the Exon Junction Complex (EJC)"/>
</dbReference>
<dbReference type="Reactome" id="R-SCE-975957">
    <property type="pathway name" value="Nonsense Mediated Decay (NMD) enhanced by the Exon Junction Complex (EJC)"/>
</dbReference>
<dbReference type="BioGRID-ORCS" id="853071">
    <property type="hits" value="10 hits in 10 CRISPR screens"/>
</dbReference>
<dbReference type="CD-CODE" id="A777E0F8">
    <property type="entry name" value="P-body"/>
</dbReference>
<dbReference type="CD-CODE" id="E03F929F">
    <property type="entry name" value="Stress granule"/>
</dbReference>
<dbReference type="EvolutionaryTrace" id="P39935"/>
<dbReference type="PRO" id="PR:P39935"/>
<dbReference type="Proteomes" id="UP000002311">
    <property type="component" value="Chromosome VII"/>
</dbReference>
<dbReference type="RNAct" id="P39935">
    <property type="molecule type" value="protein"/>
</dbReference>
<dbReference type="GO" id="GO:0005737">
    <property type="term" value="C:cytoplasm"/>
    <property type="evidence" value="ECO:0000314"/>
    <property type="project" value="SGD"/>
</dbReference>
<dbReference type="GO" id="GO:0010494">
    <property type="term" value="C:cytoplasmic stress granule"/>
    <property type="evidence" value="ECO:0000314"/>
    <property type="project" value="SGD"/>
</dbReference>
<dbReference type="GO" id="GO:0016281">
    <property type="term" value="C:eukaryotic translation initiation factor 4F complex"/>
    <property type="evidence" value="ECO:0000315"/>
    <property type="project" value="SGD"/>
</dbReference>
<dbReference type="GO" id="GO:0005739">
    <property type="term" value="C:mitochondrion"/>
    <property type="evidence" value="ECO:0007005"/>
    <property type="project" value="SGD"/>
</dbReference>
<dbReference type="GO" id="GO:0000932">
    <property type="term" value="C:P-body"/>
    <property type="evidence" value="ECO:0000314"/>
    <property type="project" value="SGD"/>
</dbReference>
<dbReference type="GO" id="GO:0005840">
    <property type="term" value="C:ribosome"/>
    <property type="evidence" value="ECO:0000303"/>
    <property type="project" value="ComplexPortal"/>
</dbReference>
<dbReference type="GO" id="GO:0001671">
    <property type="term" value="F:ATPase activator activity"/>
    <property type="evidence" value="ECO:0000314"/>
    <property type="project" value="SGD"/>
</dbReference>
<dbReference type="GO" id="GO:0140693">
    <property type="term" value="F:molecular condensate scaffold activity"/>
    <property type="evidence" value="ECO:0000314"/>
    <property type="project" value="DisProt"/>
</dbReference>
<dbReference type="GO" id="GO:0003729">
    <property type="term" value="F:mRNA binding"/>
    <property type="evidence" value="ECO:0007005"/>
    <property type="project" value="SGD"/>
</dbReference>
<dbReference type="GO" id="GO:0003723">
    <property type="term" value="F:RNA binding"/>
    <property type="evidence" value="ECO:0000314"/>
    <property type="project" value="SGD"/>
</dbReference>
<dbReference type="GO" id="GO:0003743">
    <property type="term" value="F:translation initiation factor activity"/>
    <property type="evidence" value="ECO:0000318"/>
    <property type="project" value="GO_Central"/>
</dbReference>
<dbReference type="GO" id="GO:0042149">
    <property type="term" value="P:cellular response to glucose starvation"/>
    <property type="evidence" value="ECO:0000315"/>
    <property type="project" value="SGD"/>
</dbReference>
<dbReference type="GO" id="GO:1900103">
    <property type="term" value="P:positive regulation of endoplasmic reticulum unfolded protein response"/>
    <property type="evidence" value="ECO:0000316"/>
    <property type="project" value="ParkinsonsUK-UCL"/>
</dbReference>
<dbReference type="GO" id="GO:1901195">
    <property type="term" value="P:positive regulation of formation of translation preinitiation complex"/>
    <property type="evidence" value="ECO:0000314"/>
    <property type="project" value="SGD"/>
</dbReference>
<dbReference type="GO" id="GO:0051246">
    <property type="term" value="P:regulation of protein metabolic process"/>
    <property type="evidence" value="ECO:0000316"/>
    <property type="project" value="ParkinsonsUK-UCL"/>
</dbReference>
<dbReference type="GO" id="GO:0006446">
    <property type="term" value="P:regulation of translational initiation"/>
    <property type="evidence" value="ECO:0000303"/>
    <property type="project" value="ComplexPortal"/>
</dbReference>
<dbReference type="GO" id="GO:0042273">
    <property type="term" value="P:ribosomal large subunit biogenesis"/>
    <property type="evidence" value="ECO:0000315"/>
    <property type="project" value="SGD"/>
</dbReference>
<dbReference type="GO" id="GO:0034063">
    <property type="term" value="P:stress granule assembly"/>
    <property type="evidence" value="ECO:0000315"/>
    <property type="project" value="SGD"/>
</dbReference>
<dbReference type="GO" id="GO:0006413">
    <property type="term" value="P:translational initiation"/>
    <property type="evidence" value="ECO:0000315"/>
    <property type="project" value="ParkinsonsUK-UCL"/>
</dbReference>
<dbReference type="DisProt" id="DP00082"/>
<dbReference type="FunFam" id="1.25.40.180:FF:000020">
    <property type="entry name" value="Eukaryotic translation initiation factor subunit"/>
    <property type="match status" value="1"/>
</dbReference>
<dbReference type="FunFam" id="1.20.970.30:FF:000002">
    <property type="entry name" value="Translation initiation factor eIF4G"/>
    <property type="match status" value="1"/>
</dbReference>
<dbReference type="Gene3D" id="1.25.40.180">
    <property type="match status" value="1"/>
</dbReference>
<dbReference type="Gene3D" id="1.20.970.30">
    <property type="entry name" value="eIF4G, eIF4E-binding domain"/>
    <property type="match status" value="1"/>
</dbReference>
<dbReference type="InterPro" id="IPR016024">
    <property type="entry name" value="ARM-type_fold"/>
</dbReference>
<dbReference type="InterPro" id="IPR022745">
    <property type="entry name" value="eIF4G1_eIF4E-bd"/>
</dbReference>
<dbReference type="InterPro" id="IPR036211">
    <property type="entry name" value="eIF4G_eIF4E-bd_sf"/>
</dbReference>
<dbReference type="InterPro" id="IPR003890">
    <property type="entry name" value="MIF4G-like_typ-3"/>
</dbReference>
<dbReference type="PANTHER" id="PTHR23253">
    <property type="entry name" value="EUKARYOTIC TRANSLATION INITIATION FACTOR 4 GAMMA"/>
    <property type="match status" value="1"/>
</dbReference>
<dbReference type="PANTHER" id="PTHR23253:SF9">
    <property type="entry name" value="EUKARYOTIC TRANSLATION INITIATION FACTOR 4 GAMMA 2"/>
    <property type="match status" value="1"/>
</dbReference>
<dbReference type="Pfam" id="PF12152">
    <property type="entry name" value="eIF_4G1"/>
    <property type="match status" value="1"/>
</dbReference>
<dbReference type="Pfam" id="PF02854">
    <property type="entry name" value="MIF4G"/>
    <property type="match status" value="1"/>
</dbReference>
<dbReference type="SMART" id="SM00543">
    <property type="entry name" value="MIF4G"/>
    <property type="match status" value="1"/>
</dbReference>
<dbReference type="SUPFAM" id="SSF48371">
    <property type="entry name" value="ARM repeat"/>
    <property type="match status" value="1"/>
</dbReference>
<dbReference type="SUPFAM" id="SSF101489">
    <property type="entry name" value="Eukaryotic initiation factor 4f subunit eIF4g, eIF4e-binding domain"/>
    <property type="match status" value="1"/>
</dbReference>
<reference key="1">
    <citation type="journal article" date="1993" name="Mol. Cell. Biol.">
        <title>TIF4631 and TIF4632: two yeast genes encoding the high-molecular-weight subunits of the cap-binding protein complex (eukaryotic initiation factor 4F) contain an RNA recognition motif-like sequence and carry out an essential function.</title>
        <authorList>
            <person name="Goyer C."/>
            <person name="Altmann M."/>
            <person name="Lee H.S."/>
            <person name="Blanc A."/>
            <person name="Deshmukh M."/>
            <person name="Woolford J.L. Jr."/>
            <person name="Trachsel H."/>
            <person name="Sonenberg N."/>
        </authorList>
    </citation>
    <scope>NUCLEOTIDE SEQUENCE [GENOMIC DNA]</scope>
</reference>
<reference key="2">
    <citation type="journal article" date="1997" name="Yeast">
        <title>Sequence analysis of 203 kilobases from Saccharomyces cerevisiae chromosome VII.</title>
        <authorList>
            <person name="Rieger M."/>
            <person name="Brueckner M."/>
            <person name="Schaefer M."/>
            <person name="Mueller-Auer S."/>
        </authorList>
    </citation>
    <scope>NUCLEOTIDE SEQUENCE [GENOMIC DNA]</scope>
    <source>
        <strain>ATCC 204508 / S288c</strain>
    </source>
</reference>
<reference key="3">
    <citation type="journal article" date="1997" name="Nature">
        <title>The nucleotide sequence of Saccharomyces cerevisiae chromosome VII.</title>
        <authorList>
            <person name="Tettelin H."/>
            <person name="Agostoni-Carbone M.L."/>
            <person name="Albermann K."/>
            <person name="Albers M."/>
            <person name="Arroyo J."/>
            <person name="Backes U."/>
            <person name="Barreiros T."/>
            <person name="Bertani I."/>
            <person name="Bjourson A.J."/>
            <person name="Brueckner M."/>
            <person name="Bruschi C.V."/>
            <person name="Carignani G."/>
            <person name="Castagnoli L."/>
            <person name="Cerdan E."/>
            <person name="Clemente M.L."/>
            <person name="Coblenz A."/>
            <person name="Coglievina M."/>
            <person name="Coissac E."/>
            <person name="Defoor E."/>
            <person name="Del Bino S."/>
            <person name="Delius H."/>
            <person name="Delneri D."/>
            <person name="de Wergifosse P."/>
            <person name="Dujon B."/>
            <person name="Durand P."/>
            <person name="Entian K.-D."/>
            <person name="Eraso P."/>
            <person name="Escribano V."/>
            <person name="Fabiani L."/>
            <person name="Fartmann B."/>
            <person name="Feroli F."/>
            <person name="Feuermann M."/>
            <person name="Frontali L."/>
            <person name="Garcia-Gonzalez M."/>
            <person name="Garcia-Saez M.I."/>
            <person name="Goffeau A."/>
            <person name="Guerreiro P."/>
            <person name="Hani J."/>
            <person name="Hansen M."/>
            <person name="Hebling U."/>
            <person name="Hernandez K."/>
            <person name="Heumann K."/>
            <person name="Hilger F."/>
            <person name="Hofmann B."/>
            <person name="Indge K.J."/>
            <person name="James C.M."/>
            <person name="Klima R."/>
            <person name="Koetter P."/>
            <person name="Kramer B."/>
            <person name="Kramer W."/>
            <person name="Lauquin G."/>
            <person name="Leuther H."/>
            <person name="Louis E.J."/>
            <person name="Maillier E."/>
            <person name="Marconi A."/>
            <person name="Martegani E."/>
            <person name="Mazon M.J."/>
            <person name="Mazzoni C."/>
            <person name="McReynolds A.D.K."/>
            <person name="Melchioretto P."/>
            <person name="Mewes H.-W."/>
            <person name="Minenkova O."/>
            <person name="Mueller-Auer S."/>
            <person name="Nawrocki A."/>
            <person name="Netter P."/>
            <person name="Neu R."/>
            <person name="Nombela C."/>
            <person name="Oliver S.G."/>
            <person name="Panzeri L."/>
            <person name="Paoluzi S."/>
            <person name="Plevani P."/>
            <person name="Portetelle D."/>
            <person name="Portillo F."/>
            <person name="Potier S."/>
            <person name="Purnelle B."/>
            <person name="Rieger M."/>
            <person name="Riles L."/>
            <person name="Rinaldi T."/>
            <person name="Robben J."/>
            <person name="Rodrigues-Pousada C."/>
            <person name="Rodriguez-Belmonte E."/>
            <person name="Rodriguez-Torres A.M."/>
            <person name="Rose M."/>
            <person name="Ruzzi M."/>
            <person name="Saliola M."/>
            <person name="Sanchez-Perez M."/>
            <person name="Schaefer B."/>
            <person name="Schaefer M."/>
            <person name="Scharfe M."/>
            <person name="Schmidheini T."/>
            <person name="Schreer A."/>
            <person name="Skala J."/>
            <person name="Souciet J.-L."/>
            <person name="Steensma H.Y."/>
            <person name="Talla E."/>
            <person name="Thierry A."/>
            <person name="Vandenbol M."/>
            <person name="van der Aart Q.J.M."/>
            <person name="Van Dyck L."/>
            <person name="Vanoni M."/>
            <person name="Verhasselt P."/>
            <person name="Voet M."/>
            <person name="Volckaert G."/>
            <person name="Wambutt R."/>
            <person name="Watson M.D."/>
            <person name="Weber N."/>
            <person name="Wedler E."/>
            <person name="Wedler H."/>
            <person name="Wipfli P."/>
            <person name="Wolf K."/>
            <person name="Wright L.F."/>
            <person name="Zaccaria P."/>
            <person name="Zimmermann M."/>
            <person name="Zollner A."/>
            <person name="Kleine K."/>
        </authorList>
    </citation>
    <scope>NUCLEOTIDE SEQUENCE [LARGE SCALE GENOMIC DNA]</scope>
    <source>
        <strain>ATCC 204508 / S288c</strain>
    </source>
</reference>
<reference key="4">
    <citation type="journal article" date="2014" name="G3 (Bethesda)">
        <title>The reference genome sequence of Saccharomyces cerevisiae: Then and now.</title>
        <authorList>
            <person name="Engel S.R."/>
            <person name="Dietrich F.S."/>
            <person name="Fisk D.G."/>
            <person name="Binkley G."/>
            <person name="Balakrishnan R."/>
            <person name="Costanzo M.C."/>
            <person name="Dwight S.S."/>
            <person name="Hitz B.C."/>
            <person name="Karra K."/>
            <person name="Nash R.S."/>
            <person name="Weng S."/>
            <person name="Wong E.D."/>
            <person name="Lloyd P."/>
            <person name="Skrzypek M.S."/>
            <person name="Miyasato S.R."/>
            <person name="Simison M."/>
            <person name="Cherry J.M."/>
        </authorList>
    </citation>
    <scope>GENOME REANNOTATION</scope>
    <source>
        <strain>ATCC 204508 / S288c</strain>
    </source>
</reference>
<reference key="5">
    <citation type="journal article" date="2007" name="Genome Res.">
        <title>Approaching a complete repository of sequence-verified protein-encoding clones for Saccharomyces cerevisiae.</title>
        <authorList>
            <person name="Hu Y."/>
            <person name="Rolfs A."/>
            <person name="Bhullar B."/>
            <person name="Murthy T.V.S."/>
            <person name="Zhu C."/>
            <person name="Berger M.F."/>
            <person name="Camargo A.A."/>
            <person name="Kelley F."/>
            <person name="McCarron S."/>
            <person name="Jepson D."/>
            <person name="Richardson A."/>
            <person name="Raphael J."/>
            <person name="Moreira D."/>
            <person name="Taycher E."/>
            <person name="Zuo D."/>
            <person name="Mohr S."/>
            <person name="Kane M.F."/>
            <person name="Williamson J."/>
            <person name="Simpson A.J.G."/>
            <person name="Bulyk M.L."/>
            <person name="Harlow E."/>
            <person name="Marsischky G."/>
            <person name="Kolodner R.D."/>
            <person name="LaBaer J."/>
        </authorList>
    </citation>
    <scope>NUCLEOTIDE SEQUENCE [GENOMIC DNA]</scope>
    <source>
        <strain>ATCC 204508 / S288c</strain>
    </source>
</reference>
<reference key="6">
    <citation type="journal article" date="1997" name="Proc. Natl. Acad. Sci. U.S.A.">
        <title>Translation initiation factor eIF4G mediates in vitro poly(A) tail-dependent translation.</title>
        <authorList>
            <person name="Tarun S.Z. Jr."/>
            <person name="Wells S.E."/>
            <person name="Deardorff J.A."/>
            <person name="Sachs A.B."/>
        </authorList>
    </citation>
    <scope>FUNCTION</scope>
    <scope>INTERACTION WITH PAB1</scope>
    <scope>MUTAGENESIS OF 214-LYS--LYS-217</scope>
</reference>
<reference key="7">
    <citation type="journal article" date="1998" name="Mol. Cell">
        <title>Circularization of mRNA by eukaryotic translation initiation factors.</title>
        <authorList>
            <person name="Wells S.E."/>
            <person name="Hillner P.E."/>
            <person name="Vale R.D."/>
            <person name="Sachs A.B."/>
        </authorList>
    </citation>
    <scope>INTERACTION WITH PAB1</scope>
    <scope>ATOMIC FORCE MICROSCOPY OF CIRCULAR MRNP STRUCTURE</scope>
</reference>
<reference key="8">
    <citation type="journal article" date="1999" name="EMBO J.">
        <title>The yeast poly(A)-binding protein Pab1p stimulates in vitro poly(A)-dependent and cap-dependent translation by distinct mechanisms.</title>
        <authorList>
            <person name="Otero L.J."/>
            <person name="Ashe M.P."/>
            <person name="Sachs A.B."/>
        </authorList>
    </citation>
    <scope>FUNCTION</scope>
    <scope>INTERACTION WITH PAB1</scope>
</reference>
<reference key="9">
    <citation type="journal article" date="2000" name="EMBO J.">
        <title>The eukaryotic mRNA decapping protein Dcp1 interacts physically and functionally with the eIF4F translation initiation complex.</title>
        <authorList>
            <person name="Vilela C."/>
            <person name="Velasco C."/>
            <person name="Ptushkina M."/>
            <person name="McCarthy J.E.G."/>
        </authorList>
    </citation>
    <scope>INTERACTION WITH PAB1</scope>
</reference>
<reference key="10">
    <citation type="journal article" date="2001" name="Mol. Cell">
        <title>Targeting an mRNA for decapping: displacement of translation factors and association of the Lsm1p-7p complex on deadenylated yeast mRNAs.</title>
        <authorList>
            <person name="Tharun S."/>
            <person name="Parker R."/>
        </authorList>
    </citation>
    <scope>INTERACTION WITH PAT1</scope>
</reference>
<reference key="11">
    <citation type="journal article" date="2003" name="Nature">
        <title>Global analysis of protein localization in budding yeast.</title>
        <authorList>
            <person name="Huh W.-K."/>
            <person name="Falvo J.V."/>
            <person name="Gerke L.C."/>
            <person name="Carroll A.S."/>
            <person name="Howson R.W."/>
            <person name="Weissman J.S."/>
            <person name="O'Shea E.K."/>
        </authorList>
    </citation>
    <scope>SUBCELLULAR LOCATION [LARGE SCALE ANALYSIS]</scope>
</reference>
<reference key="12">
    <citation type="journal article" date="2003" name="Nature">
        <title>Global analysis of protein expression in yeast.</title>
        <authorList>
            <person name="Ghaemmaghami S."/>
            <person name="Huh W.-K."/>
            <person name="Bower K."/>
            <person name="Howson R.W."/>
            <person name="Belle A."/>
            <person name="Dephoure N."/>
            <person name="O'Shea E.K."/>
            <person name="Weissman J.S."/>
        </authorList>
    </citation>
    <scope>LEVEL OF PROTEIN EXPRESSION [LARGE SCALE ANALYSIS]</scope>
</reference>
<reference key="13">
    <citation type="journal article" date="2007" name="J. Proteome Res.">
        <title>Large-scale phosphorylation analysis of alpha-factor-arrested Saccharomyces cerevisiae.</title>
        <authorList>
            <person name="Li X."/>
            <person name="Gerber S.A."/>
            <person name="Rudner A.D."/>
            <person name="Beausoleil S.A."/>
            <person name="Haas W."/>
            <person name="Villen J."/>
            <person name="Elias J.E."/>
            <person name="Gygi S.P."/>
        </authorList>
    </citation>
    <scope>PHOSPHORYLATION [LARGE SCALE ANALYSIS] AT THR-181 AND SER-948</scope>
    <scope>IDENTIFICATION BY MASS SPECTROMETRY [LARGE SCALE ANALYSIS]</scope>
    <source>
        <strain>ADR376</strain>
    </source>
</reference>
<reference key="14">
    <citation type="journal article" date="2007" name="Proc. Natl. Acad. Sci. U.S.A.">
        <title>Analysis of phosphorylation sites on proteins from Saccharomyces cerevisiae by electron transfer dissociation (ETD) mass spectrometry.</title>
        <authorList>
            <person name="Chi A."/>
            <person name="Huttenhower C."/>
            <person name="Geer L.Y."/>
            <person name="Coon J.J."/>
            <person name="Syka J.E.P."/>
            <person name="Bai D.L."/>
            <person name="Shabanowitz J."/>
            <person name="Burke D.J."/>
            <person name="Troyanskaya O.G."/>
            <person name="Hunt D.F."/>
        </authorList>
    </citation>
    <scope>PHOSPHORYLATION [LARGE SCALE ANALYSIS] AT SER-883 AND THR-888</scope>
    <scope>IDENTIFICATION BY MASS SPECTROMETRY [LARGE SCALE ANALYSIS]</scope>
</reference>
<reference key="15">
    <citation type="journal article" date="2008" name="Mol. Cell. Proteomics">
        <title>A multidimensional chromatography technology for in-depth phosphoproteome analysis.</title>
        <authorList>
            <person name="Albuquerque C.P."/>
            <person name="Smolka M.B."/>
            <person name="Payne S.H."/>
            <person name="Bafna V."/>
            <person name="Eng J."/>
            <person name="Zhou H."/>
        </authorList>
    </citation>
    <scope>PHOSPHORYLATION [LARGE SCALE ANALYSIS] AT SER-908 AND SER-948</scope>
    <scope>IDENTIFICATION BY MASS SPECTROMETRY [LARGE SCALE ANALYSIS]</scope>
</reference>
<reference key="16">
    <citation type="journal article" date="2009" name="Science">
        <title>Global analysis of Cdk1 substrate phosphorylation sites provides insights into evolution.</title>
        <authorList>
            <person name="Holt L.J."/>
            <person name="Tuch B.B."/>
            <person name="Villen J."/>
            <person name="Johnson A.D."/>
            <person name="Gygi S.P."/>
            <person name="Morgan D.O."/>
        </authorList>
    </citation>
    <scope>PHOSPHORYLATION [LARGE SCALE ANALYSIS] AT SER-948</scope>
    <scope>IDENTIFICATION BY MASS SPECTROMETRY [LARGE SCALE ANALYSIS]</scope>
</reference>
<reference key="17">
    <citation type="journal article" date="2013" name="Nat. Struct. Mol. Biol.">
        <title>Global analysis of yeast mRNPs.</title>
        <authorList>
            <person name="Mitchell S.F."/>
            <person name="Jain S."/>
            <person name="She M."/>
            <person name="Parker R."/>
        </authorList>
    </citation>
    <scope>SUBCELLULAR LOCATION</scope>
</reference>
<reference key="18">
    <citation type="journal article" date="2021" name="J. Proteome Res.">
        <title>Discovery of arginine methylation, phosphorylation, and their co-occurrence in condensate-associated proteins in Saccharomyces cerevisiae.</title>
        <authorList>
            <person name="Hamey J.J."/>
            <person name="Nguyen A."/>
            <person name="Wilkins M.R."/>
        </authorList>
    </citation>
    <scope>PHOSPHORYLATION AT SER-163; SER-195; SER-503; SER-892; SER-896; SER-908 AND SER-948</scope>
</reference>
<reference evidence="14" key="19">
    <citation type="journal article" date="2003" name="Cell">
        <title>Ribosome loading onto the mRNA cap is driven by conformational coupling between eIF4G and eIF4E.</title>
        <authorList>
            <person name="Gross J.D."/>
            <person name="Moerke N.J."/>
            <person name="von der Haar T."/>
            <person name="Lugovskoy A.A."/>
            <person name="Sachs A.B."/>
            <person name="McCarthy J.E.G."/>
            <person name="Wagner G."/>
        </authorList>
    </citation>
    <scope>STRUCTURE BY NMR OF 389-488</scope>
</reference>
<reference evidence="15 16" key="20">
    <citation type="journal article" date="2008" name="Proc. Natl. Acad. Sci. U.S.A.">
        <title>Crystal structure of the yeast eIF4A-eIF4G complex: an RNA-helicase controlled by protein-protein interactions.</title>
        <authorList>
            <person name="Schuetz P."/>
            <person name="Bumann M."/>
            <person name="Oberholzer A.E."/>
            <person name="Bieniossek C."/>
            <person name="Trachsel H."/>
            <person name="Altmann M."/>
            <person name="Baumann U."/>
        </authorList>
    </citation>
    <scope>X-RAY CRYSTALLOGRAPHY (2.60 ANGSTROMS) OF 572-854</scope>
</reference>
<comment type="function">
    <text evidence="3 10">Component of the eIF4F complex, which interacts with the mRNA cap structure and serves as an initial point of assembly for the translation apparatus. Stimulates translation by interaction with polyadenylate-binding protein PAB1, bringing the 5'- and 3'-ends of the mRNA in proximity. The formation of this circular mRNP structure appears to be critical for the synergistic effects of the cap and the poly(A) tail in facilitating translation initiation, recycling of ribosomes, and mRNA stability. TIF4631 is probably essential when TIF4632 is missing.</text>
</comment>
<comment type="subunit">
    <text evidence="1 3 4 5 10 11">Component of the eIF4F complex, which composition varies with external and internal environmental conditions. It is composed of at least eIF4A (TIF1/TIF2), eIF4E (TIF45) and eIF4G (TIF4631 or TIF4632) (By similarity). Interacts with PAT1 in a RNA-dependent manner.</text>
</comment>
<comment type="interaction">
    <interactant intactId="EBI-9002">
        <id>P39935</id>
    </interactant>
    <interactant intactId="EBI-150">
        <id>P07260</id>
        <label>CDC33</label>
    </interactant>
    <organismsDiffer>false</organismsDiffer>
    <experiments>15</experiments>
</comment>
<comment type="interaction">
    <interactant intactId="EBI-9002">
        <id>P39935</id>
    </interactant>
    <interactant intactId="EBI-12823">
        <id>P04147</id>
        <label>PAB1</label>
    </interactant>
    <organismsDiffer>false</organismsDiffer>
    <experiments>17</experiments>
</comment>
<comment type="interaction">
    <interactant intactId="EBI-9002">
        <id>P39935</id>
    </interactant>
    <interactant intactId="EBI-9017">
        <id>P10081</id>
        <label>TIF2</label>
    </interactant>
    <organismsDiffer>false</organismsDiffer>
    <experiments>12</experiments>
</comment>
<comment type="subcellular location">
    <subcellularLocation>
        <location evidence="6 8">Cytoplasm</location>
    </subcellularLocation>
    <subcellularLocation>
        <location evidence="8">Cytoplasm</location>
        <location evidence="8">P-body</location>
    </subcellularLocation>
    <subcellularLocation>
        <location evidence="8">Cytoplasm</location>
        <location evidence="8">Stress granule</location>
    </subcellularLocation>
</comment>
<comment type="miscellaneous">
    <text evidence="7">Present with 9760 molecules/cell in log phase SD medium.</text>
</comment>
<comment type="similarity">
    <text evidence="13">Belongs to the eukaryotic initiation factor 4G family.</text>
</comment>
<evidence type="ECO:0000250" key="1"/>
<evidence type="ECO:0000256" key="2">
    <source>
        <dbReference type="SAM" id="MobiDB-lite"/>
    </source>
</evidence>
<evidence type="ECO:0000269" key="3">
    <source>
    </source>
</evidence>
<evidence type="ECO:0000269" key="4">
    <source>
    </source>
</evidence>
<evidence type="ECO:0000269" key="5">
    <source>
    </source>
</evidence>
<evidence type="ECO:0000269" key="6">
    <source>
    </source>
</evidence>
<evidence type="ECO:0000269" key="7">
    <source>
    </source>
</evidence>
<evidence type="ECO:0000269" key="8">
    <source>
    </source>
</evidence>
<evidence type="ECO:0000269" key="9">
    <source>
    </source>
</evidence>
<evidence type="ECO:0000269" key="10">
    <source>
    </source>
</evidence>
<evidence type="ECO:0000269" key="11">
    <source>
    </source>
</evidence>
<evidence type="ECO:0000303" key="12">
    <source>
    </source>
</evidence>
<evidence type="ECO:0000305" key="13"/>
<evidence type="ECO:0007744" key="14">
    <source>
        <dbReference type="PDB" id="1RF8"/>
    </source>
</evidence>
<evidence type="ECO:0007744" key="15">
    <source>
        <dbReference type="PDB" id="2VSO"/>
    </source>
</evidence>
<evidence type="ECO:0007744" key="16">
    <source>
        <dbReference type="PDB" id="2VSX"/>
    </source>
</evidence>
<evidence type="ECO:0007744" key="17">
    <source>
    </source>
</evidence>
<evidence type="ECO:0007744" key="18">
    <source>
    </source>
</evidence>
<evidence type="ECO:0007744" key="19">
    <source>
    </source>
</evidence>
<evidence type="ECO:0007744" key="20">
    <source>
    </source>
</evidence>
<evidence type="ECO:0007829" key="21">
    <source>
        <dbReference type="PDB" id="1RF8"/>
    </source>
</evidence>
<evidence type="ECO:0007829" key="22">
    <source>
        <dbReference type="PDB" id="2VSO"/>
    </source>
</evidence>
<evidence type="ECO:0007829" key="23">
    <source>
        <dbReference type="PDB" id="2VSX"/>
    </source>
</evidence>
<evidence type="ECO:0007829" key="24">
    <source>
        <dbReference type="PDB" id="6Z29"/>
    </source>
</evidence>
<keyword id="KW-0002">3D-structure</keyword>
<keyword id="KW-0963">Cytoplasm</keyword>
<keyword id="KW-0396">Initiation factor</keyword>
<keyword id="KW-0597">Phosphoprotein</keyword>
<keyword id="KW-0648">Protein biosynthesis</keyword>
<keyword id="KW-1185">Reference proteome</keyword>
<keyword id="KW-0694">RNA-binding</keyword>
<keyword id="KW-0810">Translation regulation</keyword>
<accession>P39935</accession>
<accession>D6VUU6</accession>
<proteinExistence type="evidence at protein level"/>
<protein>
    <recommendedName>
        <fullName>Eukaryotic initiation factor 4F subunit p150</fullName>
        <shortName evidence="12">eIF-4F p150</shortName>
        <shortName>eIF4F p150</shortName>
    </recommendedName>
    <alternativeName>
        <fullName evidence="12">Translation initiation factor 4(4)-F(6) subunit gamma(3) protein 1</fullName>
    </alternativeName>
    <alternativeName>
        <fullName>eIF4G1</fullName>
    </alternativeName>
    <alternativeName>
        <fullName>mRNA cap-binding protein complex subunit p150</fullName>
    </alternativeName>
</protein>